<protein>
    <recommendedName>
        <fullName>Putative phosphate permease CT_962</fullName>
    </recommendedName>
</protein>
<name>Y962_CHLTR</name>
<keyword id="KW-1003">Cell membrane</keyword>
<keyword id="KW-0472">Membrane</keyword>
<keyword id="KW-0592">Phosphate transport</keyword>
<keyword id="KW-1185">Reference proteome</keyword>
<keyword id="KW-0812">Transmembrane</keyword>
<keyword id="KW-1133">Transmembrane helix</keyword>
<keyword id="KW-0813">Transport</keyword>
<proteinExistence type="inferred from homology"/>
<evidence type="ECO:0000255" key="1"/>
<evidence type="ECO:0000305" key="2"/>
<feature type="chain" id="PRO_0000080797" description="Putative phosphate permease CT_962">
    <location>
        <begin position="1"/>
        <end position="426"/>
    </location>
</feature>
<feature type="transmembrane region" description="Helical" evidence="1">
    <location>
        <begin position="1"/>
        <end position="21"/>
    </location>
</feature>
<feature type="transmembrane region" description="Helical" evidence="1">
    <location>
        <begin position="37"/>
        <end position="57"/>
    </location>
</feature>
<feature type="transmembrane region" description="Helical" evidence="1">
    <location>
        <begin position="83"/>
        <end position="103"/>
    </location>
</feature>
<feature type="transmembrane region" description="Helical" evidence="1">
    <location>
        <begin position="104"/>
        <end position="124"/>
    </location>
</feature>
<feature type="transmembrane region" description="Helical" evidence="1">
    <location>
        <begin position="140"/>
        <end position="160"/>
    </location>
</feature>
<feature type="transmembrane region" description="Helical" evidence="1">
    <location>
        <begin position="183"/>
        <end position="203"/>
    </location>
</feature>
<feature type="transmembrane region" description="Helical" evidence="1">
    <location>
        <begin position="207"/>
        <end position="227"/>
    </location>
</feature>
<feature type="transmembrane region" description="Helical" evidence="1">
    <location>
        <begin position="260"/>
        <end position="280"/>
    </location>
</feature>
<feature type="transmembrane region" description="Helical" evidence="1">
    <location>
        <begin position="309"/>
        <end position="329"/>
    </location>
</feature>
<feature type="transmembrane region" description="Helical" evidence="1">
    <location>
        <begin position="365"/>
        <end position="385"/>
    </location>
</feature>
<feature type="transmembrane region" description="Helical" evidence="1">
    <location>
        <begin position="399"/>
        <end position="419"/>
    </location>
</feature>
<comment type="function">
    <text>Potential transporter for phosphate.</text>
</comment>
<comment type="subcellular location">
    <subcellularLocation>
        <location evidence="2">Cell membrane</location>
        <topology evidence="2">Multi-pass membrane protein</topology>
    </subcellularLocation>
</comment>
<comment type="similarity">
    <text evidence="2">Belongs to the inorganic phosphate transporter (PiT) (TC 2.A.20) family.</text>
</comment>
<sequence length="426" mass="45429">MWLLLVCVVVGGFYTAWNIGANDVANAVGPSVGAGALTLKQAVLIAAVFEFLGAVLLGDRVIGTIESGLVAPSGHVLSSQDYVFGMTAALLATGVWLQIASFCGWPVSTTHAIVGAVLGFGIILKEDAVIYWNSCGRVFVSWLASPIIGGYFAFLIFSFIRKAILYKKDPVSAMVRIAPFLSAIIIFALGLVLILSGAVAPVISFSPALRIVCGLSLFAFFFTIWGIRFFKLAILPQEVLPGTLLDRLLSKSTDYGRKYLIVERIFAYLQMIIACFMSFAHGSNDVANAIAPVAGIYRTLYPQSYSSKVLLVFMSLGGLGLVCGLATWGWRVIDTIGKKITELTPSRGFSVGMSSAITIAAASSLGFPISTTHVVVGSVLGIGFARGLRAINLRIIKDIVLSWFITVPAGAALSIVFFLLLRALFC</sequence>
<gene>
    <name type="ordered locus">CT_692</name>
</gene>
<accession>O84698</accession>
<dbReference type="EMBL" id="AE001273">
    <property type="protein sequence ID" value="AAC68287.1"/>
    <property type="molecule type" value="Genomic_DNA"/>
</dbReference>
<dbReference type="PIR" id="H71483">
    <property type="entry name" value="H71483"/>
</dbReference>
<dbReference type="RefSeq" id="NP_220211.1">
    <property type="nucleotide sequence ID" value="NC_000117.1"/>
</dbReference>
<dbReference type="RefSeq" id="WP_009872067.1">
    <property type="nucleotide sequence ID" value="NC_000117.1"/>
</dbReference>
<dbReference type="SMR" id="O84698"/>
<dbReference type="FunCoup" id="O84698">
    <property type="interactions" value="187"/>
</dbReference>
<dbReference type="STRING" id="272561.CT_692"/>
<dbReference type="EnsemblBacteria" id="AAC68287">
    <property type="protein sequence ID" value="AAC68287"/>
    <property type="gene ID" value="CT_692"/>
</dbReference>
<dbReference type="GeneID" id="884481"/>
<dbReference type="KEGG" id="ctr:CT_692"/>
<dbReference type="PATRIC" id="fig|272561.5.peg.761"/>
<dbReference type="HOGENOM" id="CLU_015355_3_3_0"/>
<dbReference type="InParanoid" id="O84698"/>
<dbReference type="OrthoDB" id="19855at2"/>
<dbReference type="Proteomes" id="UP000000431">
    <property type="component" value="Chromosome"/>
</dbReference>
<dbReference type="GO" id="GO:0005886">
    <property type="term" value="C:plasma membrane"/>
    <property type="evidence" value="ECO:0007669"/>
    <property type="project" value="UniProtKB-SubCell"/>
</dbReference>
<dbReference type="GO" id="GO:0005315">
    <property type="term" value="F:phosphate transmembrane transporter activity"/>
    <property type="evidence" value="ECO:0000318"/>
    <property type="project" value="GO_Central"/>
</dbReference>
<dbReference type="GO" id="GO:0035435">
    <property type="term" value="P:phosphate ion transmembrane transport"/>
    <property type="evidence" value="ECO:0000318"/>
    <property type="project" value="GO_Central"/>
</dbReference>
<dbReference type="InterPro" id="IPR001204">
    <property type="entry name" value="Phos_transporter"/>
</dbReference>
<dbReference type="PANTHER" id="PTHR11101">
    <property type="entry name" value="PHOSPHATE TRANSPORTER"/>
    <property type="match status" value="1"/>
</dbReference>
<dbReference type="PANTHER" id="PTHR11101:SF80">
    <property type="entry name" value="PHOSPHATE TRANSPORTER"/>
    <property type="match status" value="1"/>
</dbReference>
<dbReference type="Pfam" id="PF01384">
    <property type="entry name" value="PHO4"/>
    <property type="match status" value="1"/>
</dbReference>
<organism>
    <name type="scientific">Chlamydia trachomatis serovar D (strain ATCC VR-885 / DSM 19411 / UW-3/Cx)</name>
    <dbReference type="NCBI Taxonomy" id="272561"/>
    <lineage>
        <taxon>Bacteria</taxon>
        <taxon>Pseudomonadati</taxon>
        <taxon>Chlamydiota</taxon>
        <taxon>Chlamydiia</taxon>
        <taxon>Chlamydiales</taxon>
        <taxon>Chlamydiaceae</taxon>
        <taxon>Chlamydia/Chlamydophila group</taxon>
        <taxon>Chlamydia</taxon>
    </lineage>
</organism>
<reference key="1">
    <citation type="journal article" date="1998" name="Science">
        <title>Genome sequence of an obligate intracellular pathogen of humans: Chlamydia trachomatis.</title>
        <authorList>
            <person name="Stephens R.S."/>
            <person name="Kalman S."/>
            <person name="Lammel C.J."/>
            <person name="Fan J."/>
            <person name="Marathe R."/>
            <person name="Aravind L."/>
            <person name="Mitchell W.P."/>
            <person name="Olinger L."/>
            <person name="Tatusov R.L."/>
            <person name="Zhao Q."/>
            <person name="Koonin E.V."/>
            <person name="Davis R.W."/>
        </authorList>
    </citation>
    <scope>NUCLEOTIDE SEQUENCE [LARGE SCALE GENOMIC DNA]</scope>
    <source>
        <strain>ATCC VR-885 / DSM 19411 / UW-3/Cx</strain>
    </source>
</reference>